<accession>Q88L02</accession>
<reference key="1">
    <citation type="journal article" date="2002" name="Environ. Microbiol.">
        <title>Complete genome sequence and comparative analysis of the metabolically versatile Pseudomonas putida KT2440.</title>
        <authorList>
            <person name="Nelson K.E."/>
            <person name="Weinel C."/>
            <person name="Paulsen I.T."/>
            <person name="Dodson R.J."/>
            <person name="Hilbert H."/>
            <person name="Martins dos Santos V.A.P."/>
            <person name="Fouts D.E."/>
            <person name="Gill S.R."/>
            <person name="Pop M."/>
            <person name="Holmes M."/>
            <person name="Brinkac L.M."/>
            <person name="Beanan M.J."/>
            <person name="DeBoy R.T."/>
            <person name="Daugherty S.C."/>
            <person name="Kolonay J.F."/>
            <person name="Madupu R."/>
            <person name="Nelson W.C."/>
            <person name="White O."/>
            <person name="Peterson J.D."/>
            <person name="Khouri H.M."/>
            <person name="Hance I."/>
            <person name="Chris Lee P."/>
            <person name="Holtzapple E.K."/>
            <person name="Scanlan D."/>
            <person name="Tran K."/>
            <person name="Moazzez A."/>
            <person name="Utterback T.R."/>
            <person name="Rizzo M."/>
            <person name="Lee K."/>
            <person name="Kosack D."/>
            <person name="Moestl D."/>
            <person name="Wedler H."/>
            <person name="Lauber J."/>
            <person name="Stjepandic D."/>
            <person name="Hoheisel J."/>
            <person name="Straetz M."/>
            <person name="Heim S."/>
            <person name="Kiewitz C."/>
            <person name="Eisen J.A."/>
            <person name="Timmis K.N."/>
            <person name="Duesterhoeft A."/>
            <person name="Tuemmler B."/>
            <person name="Fraser C.M."/>
        </authorList>
    </citation>
    <scope>NUCLEOTIDE SEQUENCE [LARGE SCALE GENOMIC DNA]</scope>
    <source>
        <strain>ATCC 47054 / DSM 6125 / CFBP 8728 / NCIMB 11950 / KT2440</strain>
    </source>
</reference>
<name>FADB_PSEPK</name>
<sequence length="715" mass="77450">MIYEGKAITVKALESGIVELKFDLKGESVNKFNRLTLNELRQAVDAIRADASVKGVIVRSGKDVFIVGADITEFVDNFKLPEAELVAGNLEANRIFNAFEDLEVPTVAAINGIALGGGLEMCLAADYRVMSTSARIGLPEVKLGIYPGFGGTVRLPRLIGSDNAIEWIAAGKENRAEDALKVGAVDAVVAPELLLAGALDLIKRAISGELDYKAKRQPKLEKLKLNAIEQMMAFETAKGFVAGQAGPNYPAPVEAIKSIQKAANFGRDKALEVEAAGFAKLAKTSVAESLIGLFLNDQELKRKAKAHDEIAHDVKQAAVLGAGIMGGGIAYQSAVKGTPILMKDIREEAIQLGLNEASKLLGNRVEKGRLTPAKMAEALNAIRPTLSYGDFANVDIVVEAVVENPKVKQAVLAEVEGQVKDDAILASNTSTISINLLAKALKRPENFVGMHFFNPVHMMPLVEVIRGEKSSDVAVATTVAYAKKMGKNPIVVNDCPGFLVNRVLFPYFGGFAKLVSAGVDFVRIDKVMEKFGWPMGPAYLMDVVGIDTGHHGRDVMAEGFPDRMKDERRSAVDALYEANRLGQKNGKGFYAYETDKRGKPKKVFDATVLDVLKPIVFEQREVTDEDIINWMMVPLCLETVRCLEDGIVETAAEADMGLVYGIGFPPFRGGALRYIDSIGVAEFVALADQYADLGPLYHPTAKLREMAKNGQRFFN</sequence>
<dbReference type="EC" id="4.2.1.17" evidence="1"/>
<dbReference type="EC" id="5.1.2.3" evidence="1"/>
<dbReference type="EC" id="5.3.3.8" evidence="1"/>
<dbReference type="EC" id="1.1.1.35" evidence="1"/>
<dbReference type="EMBL" id="AE015451">
    <property type="protein sequence ID" value="AAN67749.1"/>
    <property type="molecule type" value="Genomic_DNA"/>
</dbReference>
<dbReference type="RefSeq" id="NP_744285.1">
    <property type="nucleotide sequence ID" value="NC_002947.4"/>
</dbReference>
<dbReference type="RefSeq" id="WP_010953127.1">
    <property type="nucleotide sequence ID" value="NZ_CP169744.1"/>
</dbReference>
<dbReference type="SMR" id="Q88L02"/>
<dbReference type="STRING" id="160488.PP_2136"/>
<dbReference type="PaxDb" id="160488-PP_2136"/>
<dbReference type="GeneID" id="83681343"/>
<dbReference type="KEGG" id="ppu:PP_2136"/>
<dbReference type="PATRIC" id="fig|160488.4.peg.2253"/>
<dbReference type="eggNOG" id="COG1024">
    <property type="taxonomic scope" value="Bacteria"/>
</dbReference>
<dbReference type="eggNOG" id="COG1250">
    <property type="taxonomic scope" value="Bacteria"/>
</dbReference>
<dbReference type="HOGENOM" id="CLU_009834_16_3_6"/>
<dbReference type="OrthoDB" id="5389341at2"/>
<dbReference type="PhylomeDB" id="Q88L02"/>
<dbReference type="BioCyc" id="MetaCyc:G1G01-2277-MONOMER"/>
<dbReference type="BioCyc" id="PPUT160488:G1G01-2277-MONOMER"/>
<dbReference type="UniPathway" id="UPA00659"/>
<dbReference type="Proteomes" id="UP000000556">
    <property type="component" value="Chromosome"/>
</dbReference>
<dbReference type="GO" id="GO:0036125">
    <property type="term" value="C:fatty acid beta-oxidation multienzyme complex"/>
    <property type="evidence" value="ECO:0007669"/>
    <property type="project" value="InterPro"/>
</dbReference>
<dbReference type="GO" id="GO:0008692">
    <property type="term" value="F:3-hydroxybutyryl-CoA epimerase activity"/>
    <property type="evidence" value="ECO:0007669"/>
    <property type="project" value="UniProtKB-UniRule"/>
</dbReference>
<dbReference type="GO" id="GO:0004165">
    <property type="term" value="F:delta(3)-delta(2)-enoyl-CoA isomerase activity"/>
    <property type="evidence" value="ECO:0007669"/>
    <property type="project" value="UniProtKB-UniRule"/>
</dbReference>
<dbReference type="GO" id="GO:0004300">
    <property type="term" value="F:enoyl-CoA hydratase activity"/>
    <property type="evidence" value="ECO:0007669"/>
    <property type="project" value="UniProtKB-UniRule"/>
</dbReference>
<dbReference type="GO" id="GO:0016509">
    <property type="term" value="F:long-chain-3-hydroxyacyl-CoA dehydrogenase activity"/>
    <property type="evidence" value="ECO:0007669"/>
    <property type="project" value="TreeGrafter"/>
</dbReference>
<dbReference type="GO" id="GO:0070403">
    <property type="term" value="F:NAD+ binding"/>
    <property type="evidence" value="ECO:0007669"/>
    <property type="project" value="InterPro"/>
</dbReference>
<dbReference type="GO" id="GO:0006635">
    <property type="term" value="P:fatty acid beta-oxidation"/>
    <property type="evidence" value="ECO:0007669"/>
    <property type="project" value="UniProtKB-UniRule"/>
</dbReference>
<dbReference type="CDD" id="cd06558">
    <property type="entry name" value="crotonase-like"/>
    <property type="match status" value="1"/>
</dbReference>
<dbReference type="FunFam" id="1.10.1040.50:FF:000001">
    <property type="entry name" value="Fatty acid oxidation complex subunit alpha"/>
    <property type="match status" value="1"/>
</dbReference>
<dbReference type="FunFam" id="3.90.226.10:FF:000018">
    <property type="entry name" value="Fatty acid oxidation complex subunit alpha"/>
    <property type="match status" value="1"/>
</dbReference>
<dbReference type="FunFam" id="3.40.50.720:FF:000009">
    <property type="entry name" value="Fatty oxidation complex, alpha subunit"/>
    <property type="match status" value="1"/>
</dbReference>
<dbReference type="Gene3D" id="1.10.1040.50">
    <property type="match status" value="1"/>
</dbReference>
<dbReference type="Gene3D" id="3.90.226.10">
    <property type="entry name" value="2-enoyl-CoA Hydratase, Chain A, domain 1"/>
    <property type="match status" value="1"/>
</dbReference>
<dbReference type="Gene3D" id="3.40.50.720">
    <property type="entry name" value="NAD(P)-binding Rossmann-like Domain"/>
    <property type="match status" value="1"/>
</dbReference>
<dbReference type="HAMAP" id="MF_01621">
    <property type="entry name" value="FadB"/>
    <property type="match status" value="1"/>
</dbReference>
<dbReference type="InterPro" id="IPR006180">
    <property type="entry name" value="3-OHacyl-CoA_DH_CS"/>
</dbReference>
<dbReference type="InterPro" id="IPR006176">
    <property type="entry name" value="3-OHacyl-CoA_DH_NAD-bd"/>
</dbReference>
<dbReference type="InterPro" id="IPR006108">
    <property type="entry name" value="3HC_DH_C"/>
</dbReference>
<dbReference type="InterPro" id="IPR008927">
    <property type="entry name" value="6-PGluconate_DH-like_C_sf"/>
</dbReference>
<dbReference type="InterPro" id="IPR029045">
    <property type="entry name" value="ClpP/crotonase-like_dom_sf"/>
</dbReference>
<dbReference type="InterPro" id="IPR018376">
    <property type="entry name" value="Enoyl-CoA_hyd/isom_CS"/>
</dbReference>
<dbReference type="InterPro" id="IPR001753">
    <property type="entry name" value="Enoyl-CoA_hydra/iso"/>
</dbReference>
<dbReference type="InterPro" id="IPR050136">
    <property type="entry name" value="FA_oxidation_alpha_subunit"/>
</dbReference>
<dbReference type="InterPro" id="IPR012799">
    <property type="entry name" value="FadB"/>
</dbReference>
<dbReference type="InterPro" id="IPR036291">
    <property type="entry name" value="NAD(P)-bd_dom_sf"/>
</dbReference>
<dbReference type="NCBIfam" id="TIGR02437">
    <property type="entry name" value="FadB"/>
    <property type="match status" value="1"/>
</dbReference>
<dbReference type="NCBIfam" id="NF008727">
    <property type="entry name" value="PRK11730.1"/>
    <property type="match status" value="1"/>
</dbReference>
<dbReference type="PANTHER" id="PTHR43612">
    <property type="entry name" value="TRIFUNCTIONAL ENZYME SUBUNIT ALPHA"/>
    <property type="match status" value="1"/>
</dbReference>
<dbReference type="PANTHER" id="PTHR43612:SF3">
    <property type="entry name" value="TRIFUNCTIONAL ENZYME SUBUNIT ALPHA, MITOCHONDRIAL"/>
    <property type="match status" value="1"/>
</dbReference>
<dbReference type="Pfam" id="PF00725">
    <property type="entry name" value="3HCDH"/>
    <property type="match status" value="1"/>
</dbReference>
<dbReference type="Pfam" id="PF02737">
    <property type="entry name" value="3HCDH_N"/>
    <property type="match status" value="1"/>
</dbReference>
<dbReference type="Pfam" id="PF00378">
    <property type="entry name" value="ECH_1"/>
    <property type="match status" value="1"/>
</dbReference>
<dbReference type="SUPFAM" id="SSF48179">
    <property type="entry name" value="6-phosphogluconate dehydrogenase C-terminal domain-like"/>
    <property type="match status" value="2"/>
</dbReference>
<dbReference type="SUPFAM" id="SSF52096">
    <property type="entry name" value="ClpP/crotonase"/>
    <property type="match status" value="1"/>
</dbReference>
<dbReference type="SUPFAM" id="SSF51735">
    <property type="entry name" value="NAD(P)-binding Rossmann-fold domains"/>
    <property type="match status" value="1"/>
</dbReference>
<dbReference type="PROSITE" id="PS00067">
    <property type="entry name" value="3HCDH"/>
    <property type="match status" value="1"/>
</dbReference>
<dbReference type="PROSITE" id="PS00166">
    <property type="entry name" value="ENOYL_COA_HYDRATASE"/>
    <property type="match status" value="1"/>
</dbReference>
<evidence type="ECO:0000255" key="1">
    <source>
        <dbReference type="HAMAP-Rule" id="MF_01621"/>
    </source>
</evidence>
<protein>
    <recommendedName>
        <fullName evidence="1">Fatty acid oxidation complex subunit alpha</fullName>
    </recommendedName>
    <domain>
        <recommendedName>
            <fullName evidence="1">Enoyl-CoA hydratase/Delta(3)-cis-Delta(2)-trans-enoyl-CoA isomerase/3-hydroxybutyryl-CoA epimerase</fullName>
            <ecNumber evidence="1">4.2.1.17</ecNumber>
            <ecNumber evidence="1">5.1.2.3</ecNumber>
            <ecNumber evidence="1">5.3.3.8</ecNumber>
        </recommendedName>
    </domain>
    <domain>
        <recommendedName>
            <fullName evidence="1">3-hydroxyacyl-CoA dehydrogenase</fullName>
            <ecNumber evidence="1">1.1.1.35</ecNumber>
        </recommendedName>
    </domain>
</protein>
<gene>
    <name evidence="1" type="primary">fadB</name>
    <name type="ordered locus">PP_2136</name>
</gene>
<feature type="chain" id="PRO_0000109279" description="Fatty acid oxidation complex subunit alpha">
    <location>
        <begin position="1"/>
        <end position="715"/>
    </location>
</feature>
<feature type="region of interest" description="Enoyl-CoA hydratase/isomerase" evidence="1">
    <location>
        <begin position="1"/>
        <end position="190"/>
    </location>
</feature>
<feature type="region of interest" description="3-hydroxyacyl-CoA dehydrogenase" evidence="1">
    <location>
        <begin position="312"/>
        <end position="715"/>
    </location>
</feature>
<feature type="active site" description="For 3-hydroxyacyl-CoA dehydrogenase activity" evidence="1">
    <location>
        <position position="451"/>
    </location>
</feature>
<feature type="binding site" evidence="1">
    <location>
        <position position="297"/>
    </location>
    <ligand>
        <name>substrate</name>
    </ligand>
</feature>
<feature type="binding site" evidence="1">
    <location>
        <position position="325"/>
    </location>
    <ligand>
        <name>NAD(+)</name>
        <dbReference type="ChEBI" id="CHEBI:57540"/>
    </ligand>
</feature>
<feature type="binding site" evidence="1">
    <location>
        <position position="344"/>
    </location>
    <ligand>
        <name>NAD(+)</name>
        <dbReference type="ChEBI" id="CHEBI:57540"/>
    </ligand>
</feature>
<feature type="binding site" evidence="1">
    <location>
        <begin position="401"/>
        <end position="403"/>
    </location>
    <ligand>
        <name>NAD(+)</name>
        <dbReference type="ChEBI" id="CHEBI:57540"/>
    </ligand>
</feature>
<feature type="binding site" evidence="1">
    <location>
        <position position="408"/>
    </location>
    <ligand>
        <name>NAD(+)</name>
        <dbReference type="ChEBI" id="CHEBI:57540"/>
    </ligand>
</feature>
<feature type="binding site" evidence="1">
    <location>
        <position position="430"/>
    </location>
    <ligand>
        <name>NAD(+)</name>
        <dbReference type="ChEBI" id="CHEBI:57540"/>
    </ligand>
</feature>
<feature type="binding site" evidence="1">
    <location>
        <position position="454"/>
    </location>
    <ligand>
        <name>NAD(+)</name>
        <dbReference type="ChEBI" id="CHEBI:57540"/>
    </ligand>
</feature>
<feature type="binding site" evidence="1">
    <location>
        <position position="501"/>
    </location>
    <ligand>
        <name>substrate</name>
    </ligand>
</feature>
<feature type="binding site" evidence="1">
    <location>
        <position position="660"/>
    </location>
    <ligand>
        <name>substrate</name>
    </ligand>
</feature>
<feature type="site" description="Important for catalytic activity" evidence="1">
    <location>
        <position position="120"/>
    </location>
</feature>
<feature type="site" description="Important for catalytic activity" evidence="1">
    <location>
        <position position="140"/>
    </location>
</feature>
<keyword id="KW-0276">Fatty acid metabolism</keyword>
<keyword id="KW-0413">Isomerase</keyword>
<keyword id="KW-0442">Lipid degradation</keyword>
<keyword id="KW-0443">Lipid metabolism</keyword>
<keyword id="KW-0456">Lyase</keyword>
<keyword id="KW-0511">Multifunctional enzyme</keyword>
<keyword id="KW-0520">NAD</keyword>
<keyword id="KW-0560">Oxidoreductase</keyword>
<keyword id="KW-1185">Reference proteome</keyword>
<comment type="function">
    <text evidence="1">Involved in the aerobic and anaerobic degradation of long-chain fatty acids via beta-oxidation cycle. Catalyzes the formation of 3-oxoacyl-CoA from enoyl-CoA via L-3-hydroxyacyl-CoA. It can also use D-3-hydroxyacyl-CoA and cis-3-enoyl-CoA as substrate.</text>
</comment>
<comment type="catalytic activity">
    <reaction evidence="1">
        <text>a (3S)-3-hydroxyacyl-CoA + NAD(+) = a 3-oxoacyl-CoA + NADH + H(+)</text>
        <dbReference type="Rhea" id="RHEA:22432"/>
        <dbReference type="ChEBI" id="CHEBI:15378"/>
        <dbReference type="ChEBI" id="CHEBI:57318"/>
        <dbReference type="ChEBI" id="CHEBI:57540"/>
        <dbReference type="ChEBI" id="CHEBI:57945"/>
        <dbReference type="ChEBI" id="CHEBI:90726"/>
        <dbReference type="EC" id="1.1.1.35"/>
    </reaction>
</comment>
<comment type="catalytic activity">
    <reaction evidence="1">
        <text>a (3S)-3-hydroxyacyl-CoA = a (2E)-enoyl-CoA + H2O</text>
        <dbReference type="Rhea" id="RHEA:16105"/>
        <dbReference type="ChEBI" id="CHEBI:15377"/>
        <dbReference type="ChEBI" id="CHEBI:57318"/>
        <dbReference type="ChEBI" id="CHEBI:58856"/>
        <dbReference type="EC" id="4.2.1.17"/>
    </reaction>
</comment>
<comment type="catalytic activity">
    <reaction evidence="1">
        <text>a 4-saturated-(3S)-3-hydroxyacyl-CoA = a (3E)-enoyl-CoA + H2O</text>
        <dbReference type="Rhea" id="RHEA:20724"/>
        <dbReference type="ChEBI" id="CHEBI:15377"/>
        <dbReference type="ChEBI" id="CHEBI:58521"/>
        <dbReference type="ChEBI" id="CHEBI:137480"/>
        <dbReference type="EC" id="4.2.1.17"/>
    </reaction>
</comment>
<comment type="catalytic activity">
    <reaction evidence="1">
        <text>(3S)-3-hydroxybutanoyl-CoA = (3R)-3-hydroxybutanoyl-CoA</text>
        <dbReference type="Rhea" id="RHEA:21760"/>
        <dbReference type="ChEBI" id="CHEBI:57315"/>
        <dbReference type="ChEBI" id="CHEBI:57316"/>
        <dbReference type="EC" id="5.1.2.3"/>
    </reaction>
</comment>
<comment type="catalytic activity">
    <reaction evidence="1">
        <text>a (3Z)-enoyl-CoA = a 4-saturated (2E)-enoyl-CoA</text>
        <dbReference type="Rhea" id="RHEA:45900"/>
        <dbReference type="ChEBI" id="CHEBI:85097"/>
        <dbReference type="ChEBI" id="CHEBI:85489"/>
        <dbReference type="EC" id="5.3.3.8"/>
    </reaction>
</comment>
<comment type="catalytic activity">
    <reaction evidence="1">
        <text>a (3E)-enoyl-CoA = a 4-saturated (2E)-enoyl-CoA</text>
        <dbReference type="Rhea" id="RHEA:45228"/>
        <dbReference type="ChEBI" id="CHEBI:58521"/>
        <dbReference type="ChEBI" id="CHEBI:85097"/>
        <dbReference type="EC" id="5.3.3.8"/>
    </reaction>
</comment>
<comment type="pathway">
    <text evidence="1">Lipid metabolism; fatty acid beta-oxidation.</text>
</comment>
<comment type="subunit">
    <text evidence="1">Heterotetramer of two alpha chains (FadB) and two beta chains (FadA).</text>
</comment>
<comment type="similarity">
    <text evidence="1">In the N-terminal section; belongs to the enoyl-CoA hydratase/isomerase family.</text>
</comment>
<comment type="similarity">
    <text evidence="1">In the C-terminal section; belongs to the 3-hydroxyacyl-CoA dehydrogenase family.</text>
</comment>
<proteinExistence type="inferred from homology"/>
<organism>
    <name type="scientific">Pseudomonas putida (strain ATCC 47054 / DSM 6125 / CFBP 8728 / NCIMB 11950 / KT2440)</name>
    <dbReference type="NCBI Taxonomy" id="160488"/>
    <lineage>
        <taxon>Bacteria</taxon>
        <taxon>Pseudomonadati</taxon>
        <taxon>Pseudomonadota</taxon>
        <taxon>Gammaproteobacteria</taxon>
        <taxon>Pseudomonadales</taxon>
        <taxon>Pseudomonadaceae</taxon>
        <taxon>Pseudomonas</taxon>
    </lineage>
</organism>